<sequence length="288" mass="32307">MAEKKQWHETLHDQFGQYFAVDNVLYHEKTDHQDLIIFENAAFGRVMALDGVVQTTERDEFIYHEMMTHVPLLAHGHAKHVLIIGGGDGAMLREVTRHKNVESITMVEIDAGVVSFCRQYLPNHNAGSYDDPRFKLVIDDGVNFVNQTSQTFDVIISDCTDPIGPGESLFTSAFYEGCKRCLNPGGIFVAQNGVCFLQQEEAIDSHRKLSHYFSDVGFYQAAIPTYYGGIMTFAWATDNDALRHLSTEIIQARFLASGLKCRYYNPAVHTAAFALPQYLQDALASQPS</sequence>
<name>SPEE_ECO7I</name>
<organism>
    <name type="scientific">Escherichia coli O7:K1 (strain IAI39 / ExPEC)</name>
    <dbReference type="NCBI Taxonomy" id="585057"/>
    <lineage>
        <taxon>Bacteria</taxon>
        <taxon>Pseudomonadati</taxon>
        <taxon>Pseudomonadota</taxon>
        <taxon>Gammaproteobacteria</taxon>
        <taxon>Enterobacterales</taxon>
        <taxon>Enterobacteriaceae</taxon>
        <taxon>Escherichia</taxon>
    </lineage>
</organism>
<protein>
    <recommendedName>
        <fullName evidence="1">Polyamine aminopropyltransferase</fullName>
    </recommendedName>
    <alternativeName>
        <fullName evidence="1">Putrescine aminopropyltransferase</fullName>
        <shortName evidence="1">PAPT</shortName>
    </alternativeName>
    <alternativeName>
        <fullName evidence="1">Spermidine synthase</fullName>
        <shortName evidence="1">SPDS</shortName>
        <shortName evidence="1">SPDSY</shortName>
        <ecNumber evidence="1">2.5.1.16</ecNumber>
    </alternativeName>
</protein>
<gene>
    <name evidence="1" type="primary">speE</name>
    <name type="ordered locus">ECIAI39_0121</name>
</gene>
<evidence type="ECO:0000255" key="1">
    <source>
        <dbReference type="HAMAP-Rule" id="MF_00198"/>
    </source>
</evidence>
<comment type="function">
    <text evidence="1">Catalyzes the irreversible transfer of a propylamine group from the amino donor S-adenosylmethioninamine (decarboxy-AdoMet) to putrescine (1,4-diaminobutane) to yield spermidine.</text>
</comment>
<comment type="catalytic activity">
    <reaction evidence="1">
        <text>S-adenosyl 3-(methylsulfanyl)propylamine + putrescine = S-methyl-5'-thioadenosine + spermidine + H(+)</text>
        <dbReference type="Rhea" id="RHEA:12721"/>
        <dbReference type="ChEBI" id="CHEBI:15378"/>
        <dbReference type="ChEBI" id="CHEBI:17509"/>
        <dbReference type="ChEBI" id="CHEBI:57443"/>
        <dbReference type="ChEBI" id="CHEBI:57834"/>
        <dbReference type="ChEBI" id="CHEBI:326268"/>
        <dbReference type="EC" id="2.5.1.16"/>
    </reaction>
</comment>
<comment type="pathway">
    <text evidence="1">Amine and polyamine biosynthesis; spermidine biosynthesis; spermidine from putrescine: step 1/1.</text>
</comment>
<comment type="subunit">
    <text evidence="1">Homodimer or homotetramer.</text>
</comment>
<comment type="subcellular location">
    <subcellularLocation>
        <location evidence="1">Cytoplasm</location>
    </subcellularLocation>
</comment>
<comment type="similarity">
    <text evidence="1">Belongs to the spermidine/spermine synthase family.</text>
</comment>
<proteinExistence type="inferred from homology"/>
<keyword id="KW-0963">Cytoplasm</keyword>
<keyword id="KW-0620">Polyamine biosynthesis</keyword>
<keyword id="KW-0745">Spermidine biosynthesis</keyword>
<keyword id="KW-0808">Transferase</keyword>
<reference key="1">
    <citation type="journal article" date="2009" name="PLoS Genet.">
        <title>Organised genome dynamics in the Escherichia coli species results in highly diverse adaptive paths.</title>
        <authorList>
            <person name="Touchon M."/>
            <person name="Hoede C."/>
            <person name="Tenaillon O."/>
            <person name="Barbe V."/>
            <person name="Baeriswyl S."/>
            <person name="Bidet P."/>
            <person name="Bingen E."/>
            <person name="Bonacorsi S."/>
            <person name="Bouchier C."/>
            <person name="Bouvet O."/>
            <person name="Calteau A."/>
            <person name="Chiapello H."/>
            <person name="Clermont O."/>
            <person name="Cruveiller S."/>
            <person name="Danchin A."/>
            <person name="Diard M."/>
            <person name="Dossat C."/>
            <person name="Karoui M.E."/>
            <person name="Frapy E."/>
            <person name="Garry L."/>
            <person name="Ghigo J.M."/>
            <person name="Gilles A.M."/>
            <person name="Johnson J."/>
            <person name="Le Bouguenec C."/>
            <person name="Lescat M."/>
            <person name="Mangenot S."/>
            <person name="Martinez-Jehanne V."/>
            <person name="Matic I."/>
            <person name="Nassif X."/>
            <person name="Oztas S."/>
            <person name="Petit M.A."/>
            <person name="Pichon C."/>
            <person name="Rouy Z."/>
            <person name="Ruf C.S."/>
            <person name="Schneider D."/>
            <person name="Tourret J."/>
            <person name="Vacherie B."/>
            <person name="Vallenet D."/>
            <person name="Medigue C."/>
            <person name="Rocha E.P.C."/>
            <person name="Denamur E."/>
        </authorList>
    </citation>
    <scope>NUCLEOTIDE SEQUENCE [LARGE SCALE GENOMIC DNA]</scope>
    <source>
        <strain>IAI39 / ExPEC</strain>
    </source>
</reference>
<accession>B7NI81</accession>
<feature type="chain" id="PRO_1000197472" description="Polyamine aminopropyltransferase">
    <location>
        <begin position="1"/>
        <end position="288"/>
    </location>
</feature>
<feature type="domain" description="PABS" evidence="1">
    <location>
        <begin position="9"/>
        <end position="238"/>
    </location>
</feature>
<feature type="active site" description="Proton acceptor" evidence="1">
    <location>
        <position position="158"/>
    </location>
</feature>
<feature type="binding site" evidence="1">
    <location>
        <position position="33"/>
    </location>
    <ligand>
        <name>S-methyl-5'-thioadenosine</name>
        <dbReference type="ChEBI" id="CHEBI:17509"/>
    </ligand>
</feature>
<feature type="binding site" evidence="1">
    <location>
        <position position="64"/>
    </location>
    <ligand>
        <name>spermidine</name>
        <dbReference type="ChEBI" id="CHEBI:57834"/>
    </ligand>
</feature>
<feature type="binding site" evidence="1">
    <location>
        <position position="88"/>
    </location>
    <ligand>
        <name>spermidine</name>
        <dbReference type="ChEBI" id="CHEBI:57834"/>
    </ligand>
</feature>
<feature type="binding site" evidence="1">
    <location>
        <position position="108"/>
    </location>
    <ligand>
        <name>S-methyl-5'-thioadenosine</name>
        <dbReference type="ChEBI" id="CHEBI:17509"/>
    </ligand>
</feature>
<feature type="binding site" evidence="1">
    <location>
        <begin position="140"/>
        <end position="141"/>
    </location>
    <ligand>
        <name>S-methyl-5'-thioadenosine</name>
        <dbReference type="ChEBI" id="CHEBI:17509"/>
    </ligand>
</feature>
<feature type="binding site" evidence="1">
    <location>
        <begin position="158"/>
        <end position="161"/>
    </location>
    <ligand>
        <name>spermidine</name>
        <dbReference type="ChEBI" id="CHEBI:57834"/>
    </ligand>
</feature>
<feature type="binding site" evidence="1">
    <location>
        <position position="165"/>
    </location>
    <ligand>
        <name>S-methyl-5'-thioadenosine</name>
        <dbReference type="ChEBI" id="CHEBI:17509"/>
    </ligand>
</feature>
<dbReference type="EC" id="2.5.1.16" evidence="1"/>
<dbReference type="EMBL" id="CU928164">
    <property type="protein sequence ID" value="CAR16262.1"/>
    <property type="molecule type" value="Genomic_DNA"/>
</dbReference>
<dbReference type="RefSeq" id="WP_000818414.1">
    <property type="nucleotide sequence ID" value="NC_011750.1"/>
</dbReference>
<dbReference type="RefSeq" id="YP_002406170.1">
    <property type="nucleotide sequence ID" value="NC_011750.1"/>
</dbReference>
<dbReference type="SMR" id="B7NI81"/>
<dbReference type="STRING" id="585057.ECIAI39_0121"/>
<dbReference type="KEGG" id="ect:ECIAI39_0121"/>
<dbReference type="PATRIC" id="fig|585057.6.peg.131"/>
<dbReference type="HOGENOM" id="CLU_048199_0_0_6"/>
<dbReference type="UniPathway" id="UPA00248">
    <property type="reaction ID" value="UER00314"/>
</dbReference>
<dbReference type="Proteomes" id="UP000000749">
    <property type="component" value="Chromosome"/>
</dbReference>
<dbReference type="GO" id="GO:0005829">
    <property type="term" value="C:cytosol"/>
    <property type="evidence" value="ECO:0007669"/>
    <property type="project" value="TreeGrafter"/>
</dbReference>
<dbReference type="GO" id="GO:0004766">
    <property type="term" value="F:spermidine synthase activity"/>
    <property type="evidence" value="ECO:0007669"/>
    <property type="project" value="UniProtKB-UniRule"/>
</dbReference>
<dbReference type="GO" id="GO:0008295">
    <property type="term" value="P:spermidine biosynthetic process"/>
    <property type="evidence" value="ECO:0007669"/>
    <property type="project" value="UniProtKB-UniRule"/>
</dbReference>
<dbReference type="CDD" id="cd02440">
    <property type="entry name" value="AdoMet_MTases"/>
    <property type="match status" value="1"/>
</dbReference>
<dbReference type="FunFam" id="2.30.140.10:FF:000002">
    <property type="entry name" value="Polyamine aminopropyltransferase"/>
    <property type="match status" value="1"/>
</dbReference>
<dbReference type="FunFam" id="3.40.50.150:FF:000026">
    <property type="entry name" value="Polyamine aminopropyltransferase"/>
    <property type="match status" value="1"/>
</dbReference>
<dbReference type="Gene3D" id="2.30.140.10">
    <property type="entry name" value="Spermidine synthase, tetramerisation domain"/>
    <property type="match status" value="1"/>
</dbReference>
<dbReference type="Gene3D" id="3.40.50.150">
    <property type="entry name" value="Vaccinia Virus protein VP39"/>
    <property type="match status" value="1"/>
</dbReference>
<dbReference type="HAMAP" id="MF_00198">
    <property type="entry name" value="Spermidine_synth"/>
    <property type="match status" value="1"/>
</dbReference>
<dbReference type="InterPro" id="IPR030374">
    <property type="entry name" value="PABS"/>
</dbReference>
<dbReference type="InterPro" id="IPR030373">
    <property type="entry name" value="PABS_CS"/>
</dbReference>
<dbReference type="InterPro" id="IPR029063">
    <property type="entry name" value="SAM-dependent_MTases_sf"/>
</dbReference>
<dbReference type="InterPro" id="IPR001045">
    <property type="entry name" value="Spermi_synthase"/>
</dbReference>
<dbReference type="InterPro" id="IPR035246">
    <property type="entry name" value="Spermidine_synt_N"/>
</dbReference>
<dbReference type="InterPro" id="IPR037163">
    <property type="entry name" value="Spermidine_synt_N_sf"/>
</dbReference>
<dbReference type="NCBIfam" id="NF037959">
    <property type="entry name" value="MFS_SpdSyn"/>
    <property type="match status" value="1"/>
</dbReference>
<dbReference type="NCBIfam" id="NF002010">
    <property type="entry name" value="PRK00811.1"/>
    <property type="match status" value="1"/>
</dbReference>
<dbReference type="NCBIfam" id="TIGR00417">
    <property type="entry name" value="speE"/>
    <property type="match status" value="1"/>
</dbReference>
<dbReference type="PANTHER" id="PTHR11558:SF11">
    <property type="entry name" value="SPERMIDINE SYNTHASE"/>
    <property type="match status" value="1"/>
</dbReference>
<dbReference type="PANTHER" id="PTHR11558">
    <property type="entry name" value="SPERMIDINE/SPERMINE SYNTHASE"/>
    <property type="match status" value="1"/>
</dbReference>
<dbReference type="Pfam" id="PF17284">
    <property type="entry name" value="Spermine_synt_N"/>
    <property type="match status" value="1"/>
</dbReference>
<dbReference type="Pfam" id="PF01564">
    <property type="entry name" value="Spermine_synth"/>
    <property type="match status" value="1"/>
</dbReference>
<dbReference type="SUPFAM" id="SSF53335">
    <property type="entry name" value="S-adenosyl-L-methionine-dependent methyltransferases"/>
    <property type="match status" value="1"/>
</dbReference>
<dbReference type="PROSITE" id="PS01330">
    <property type="entry name" value="PABS_1"/>
    <property type="match status" value="1"/>
</dbReference>
<dbReference type="PROSITE" id="PS51006">
    <property type="entry name" value="PABS_2"/>
    <property type="match status" value="1"/>
</dbReference>